<organism>
    <name type="scientific">Xenopus laevis</name>
    <name type="common">African clawed frog</name>
    <dbReference type="NCBI Taxonomy" id="8355"/>
    <lineage>
        <taxon>Eukaryota</taxon>
        <taxon>Metazoa</taxon>
        <taxon>Chordata</taxon>
        <taxon>Craniata</taxon>
        <taxon>Vertebrata</taxon>
        <taxon>Euteleostomi</taxon>
        <taxon>Amphibia</taxon>
        <taxon>Batrachia</taxon>
        <taxon>Anura</taxon>
        <taxon>Pipoidea</taxon>
        <taxon>Pipidae</taxon>
        <taxon>Xenopodinae</taxon>
        <taxon>Xenopus</taxon>
        <taxon>Xenopus</taxon>
    </lineage>
</organism>
<proteinExistence type="evidence at transcript level"/>
<gene>
    <name type="primary">rilpl2</name>
</gene>
<reference key="1">
    <citation type="submission" date="2004-06" db="EMBL/GenBank/DDBJ databases">
        <authorList>
            <consortium name="NIH - Xenopus Gene Collection (XGC) project"/>
        </authorList>
    </citation>
    <scope>NUCLEOTIDE SEQUENCE [LARGE SCALE MRNA]</scope>
    <source>
        <tissue>Ovary</tissue>
    </source>
</reference>
<feature type="chain" id="PRO_0000317009" description="RILP-like protein 2">
    <location>
        <begin position="1"/>
        <end position="201"/>
    </location>
</feature>
<feature type="domain" description="RH1" evidence="3">
    <location>
        <begin position="14"/>
        <end position="108"/>
    </location>
</feature>
<feature type="domain" description="RH2" evidence="4">
    <location>
        <begin position="121"/>
        <end position="197"/>
    </location>
</feature>
<feature type="region of interest" description="Disordered" evidence="5">
    <location>
        <begin position="175"/>
        <end position="201"/>
    </location>
</feature>
<feature type="coiled-coil region" evidence="2">
    <location>
        <begin position="67"/>
        <end position="155"/>
    </location>
</feature>
<keyword id="KW-0966">Cell projection</keyword>
<keyword id="KW-0969">Cilium</keyword>
<keyword id="KW-0175">Coiled coil</keyword>
<keyword id="KW-0963">Cytoplasm</keyword>
<keyword id="KW-0206">Cytoskeleton</keyword>
<keyword id="KW-0653">Protein transport</keyword>
<keyword id="KW-1185">Reference proteome</keyword>
<keyword id="KW-0813">Transport</keyword>
<name>RIPL2_XENLA</name>
<evidence type="ECO:0000250" key="1"/>
<evidence type="ECO:0000255" key="2"/>
<evidence type="ECO:0000255" key="3">
    <source>
        <dbReference type="PROSITE-ProRule" id="PRU01112"/>
    </source>
</evidence>
<evidence type="ECO:0000255" key="4">
    <source>
        <dbReference type="PROSITE-ProRule" id="PRU01113"/>
    </source>
</evidence>
<evidence type="ECO:0000256" key="5">
    <source>
        <dbReference type="SAM" id="MobiDB-lite"/>
    </source>
</evidence>
<evidence type="ECO:0000305" key="6"/>
<protein>
    <recommendedName>
        <fullName>RILP-like protein 2</fullName>
    </recommendedName>
    <alternativeName>
        <fullName>Rab-interacting lysosomal-like protein 2</fullName>
    </alternativeName>
</protein>
<accession>Q6IP02</accession>
<dbReference type="EMBL" id="BC072117">
    <property type="protein sequence ID" value="AAH72117.1"/>
    <property type="status" value="ALT_INIT"/>
    <property type="molecule type" value="mRNA"/>
</dbReference>
<dbReference type="RefSeq" id="NP_001085096.2">
    <property type="nucleotide sequence ID" value="NM_001091627.1"/>
</dbReference>
<dbReference type="SMR" id="Q6IP02"/>
<dbReference type="DNASU" id="432167"/>
<dbReference type="GeneID" id="432167"/>
<dbReference type="KEGG" id="xla:432167"/>
<dbReference type="AGR" id="Xenbase:XB-GENE-5715356"/>
<dbReference type="CTD" id="432167"/>
<dbReference type="Xenbase" id="XB-GENE-5715356">
    <property type="gene designation" value="rilpl2.L"/>
</dbReference>
<dbReference type="OrthoDB" id="10069524at2759"/>
<dbReference type="Proteomes" id="UP000186698">
    <property type="component" value="Chromosome 1L"/>
</dbReference>
<dbReference type="Bgee" id="432167">
    <property type="expression patterns" value="Expressed in testis and 19 other cell types or tissues"/>
</dbReference>
<dbReference type="GO" id="GO:0005813">
    <property type="term" value="C:centrosome"/>
    <property type="evidence" value="ECO:0000250"/>
    <property type="project" value="UniProtKB"/>
</dbReference>
<dbReference type="GO" id="GO:0036064">
    <property type="term" value="C:ciliary basal body"/>
    <property type="evidence" value="ECO:0007669"/>
    <property type="project" value="TreeGrafter"/>
</dbReference>
<dbReference type="GO" id="GO:0005929">
    <property type="term" value="C:cilium"/>
    <property type="evidence" value="ECO:0000250"/>
    <property type="project" value="UniProtKB"/>
</dbReference>
<dbReference type="GO" id="GO:0005829">
    <property type="term" value="C:cytosol"/>
    <property type="evidence" value="ECO:0007669"/>
    <property type="project" value="UniProtKB-SubCell"/>
</dbReference>
<dbReference type="GO" id="GO:0016020">
    <property type="term" value="C:membrane"/>
    <property type="evidence" value="ECO:0007669"/>
    <property type="project" value="GOC"/>
</dbReference>
<dbReference type="GO" id="GO:0051959">
    <property type="term" value="F:dynein light intermediate chain binding"/>
    <property type="evidence" value="ECO:0007669"/>
    <property type="project" value="TreeGrafter"/>
</dbReference>
<dbReference type="GO" id="GO:0046983">
    <property type="term" value="F:protein dimerization activity"/>
    <property type="evidence" value="ECO:0007669"/>
    <property type="project" value="InterPro"/>
</dbReference>
<dbReference type="GO" id="GO:0031267">
    <property type="term" value="F:small GTPase binding"/>
    <property type="evidence" value="ECO:0007669"/>
    <property type="project" value="TreeGrafter"/>
</dbReference>
<dbReference type="GO" id="GO:0060271">
    <property type="term" value="P:cilium assembly"/>
    <property type="evidence" value="ECO:0007669"/>
    <property type="project" value="TreeGrafter"/>
</dbReference>
<dbReference type="GO" id="GO:0003382">
    <property type="term" value="P:epithelial cell morphogenesis"/>
    <property type="evidence" value="ECO:0000250"/>
    <property type="project" value="UniProtKB"/>
</dbReference>
<dbReference type="GO" id="GO:1903445">
    <property type="term" value="P:protein transport from ciliary membrane to plasma membrane"/>
    <property type="evidence" value="ECO:0000250"/>
    <property type="project" value="UniProtKB"/>
</dbReference>
<dbReference type="CDD" id="cd14445">
    <property type="entry name" value="RILP-like"/>
    <property type="match status" value="1"/>
</dbReference>
<dbReference type="FunFam" id="1.20.58.1770:FF:000003">
    <property type="entry name" value="RILP-like protein 2 isoform X1"/>
    <property type="match status" value="1"/>
</dbReference>
<dbReference type="Gene3D" id="1.20.58.1770">
    <property type="match status" value="1"/>
</dbReference>
<dbReference type="Gene3D" id="6.10.230.10">
    <property type="match status" value="1"/>
</dbReference>
<dbReference type="InterPro" id="IPR051241">
    <property type="entry name" value="DZIP_RILPL"/>
</dbReference>
<dbReference type="InterPro" id="IPR034743">
    <property type="entry name" value="RH1"/>
</dbReference>
<dbReference type="InterPro" id="IPR034744">
    <property type="entry name" value="RH2"/>
</dbReference>
<dbReference type="InterPro" id="IPR021563">
    <property type="entry name" value="RILP_dimer"/>
</dbReference>
<dbReference type="PANTHER" id="PTHR21502:SF2">
    <property type="entry name" value="RILP-LIKE PROTEIN 2"/>
    <property type="match status" value="1"/>
</dbReference>
<dbReference type="PANTHER" id="PTHR21502">
    <property type="entry name" value="ZINC FINGER PROTEIN DZIP1"/>
    <property type="match status" value="1"/>
</dbReference>
<dbReference type="Pfam" id="PF09744">
    <property type="entry name" value="RH1"/>
    <property type="match status" value="1"/>
</dbReference>
<dbReference type="Pfam" id="PF11461">
    <property type="entry name" value="RILP"/>
    <property type="match status" value="1"/>
</dbReference>
<dbReference type="SUPFAM" id="SSF161256">
    <property type="entry name" value="RILP dimerisation region"/>
    <property type="match status" value="1"/>
</dbReference>
<dbReference type="PROSITE" id="PS51776">
    <property type="entry name" value="RH1"/>
    <property type="match status" value="1"/>
</dbReference>
<dbReference type="PROSITE" id="PS51777">
    <property type="entry name" value="RH2"/>
    <property type="match status" value="1"/>
</dbReference>
<comment type="function">
    <text evidence="1">Involved in cell shape and neuronal morphogenesis, positively regulating the establishment and maintenance of dendritic spines. Plays a role in cellular protein transport (By similarity).</text>
</comment>
<comment type="subcellular location">
    <subcellularLocation>
        <location evidence="1">Cytoplasm</location>
        <location evidence="1">Cytosol</location>
    </subcellularLocation>
    <subcellularLocation>
        <location evidence="1">Cytoplasm</location>
        <location evidence="1">Cytoskeleton</location>
        <location evidence="1">Microtubule organizing center</location>
        <location evidence="1">Centrosome</location>
    </subcellularLocation>
    <subcellularLocation>
        <location evidence="1">Cell projection</location>
        <location evidence="1">Cilium</location>
    </subcellularLocation>
</comment>
<comment type="similarity">
    <text evidence="6">Belongs to the RILPL family.</text>
</comment>
<comment type="sequence caution" evidence="6">
    <conflict type="erroneous initiation">
        <sequence resource="EMBL-CDS" id="AAH72117"/>
    </conflict>
</comment>
<sequence length="201" mass="22752">METEQDEMGQEEMSPEMALDKDPFQLTVEDVYDISHVVGQDLLKINREARGVSSLVSDLQFKIVRVLEMLEALVNQSSLSAEELKMERDNLKAEVDRLLRDGPQMGVGPDKMVIDLTDPNRPRFTLQELRDVLQERNKLKVQLLVAQDELQCYKSGIIPSPDDQIVTLENESIITSSPRSNASKEKSTVKSLFSFKQGKNT</sequence>